<name>UNC5_DROME</name>
<proteinExistence type="evidence at protein level"/>
<accession>Q95TU8</accession>
<accession>Q9NBL0</accession>
<accession>Q9V7B5</accession>
<dbReference type="EMBL" id="AF247762">
    <property type="protein sequence ID" value="AAF74193.1"/>
    <property type="molecule type" value="mRNA"/>
</dbReference>
<dbReference type="EMBL" id="AE013599">
    <property type="protein sequence ID" value="AAF58143.2"/>
    <property type="molecule type" value="Genomic_DNA"/>
</dbReference>
<dbReference type="EMBL" id="AY058501">
    <property type="protein sequence ID" value="AAL13730.1"/>
    <property type="molecule type" value="mRNA"/>
</dbReference>
<dbReference type="RefSeq" id="NP_001286450.1">
    <property type="nucleotide sequence ID" value="NM_001299521.1"/>
</dbReference>
<dbReference type="RefSeq" id="NP_611033.2">
    <property type="nucleotide sequence ID" value="NM_137189.3"/>
</dbReference>
<dbReference type="SMR" id="Q95TU8"/>
<dbReference type="BioGRID" id="62440">
    <property type="interactions" value="8"/>
</dbReference>
<dbReference type="FunCoup" id="Q95TU8">
    <property type="interactions" value="267"/>
</dbReference>
<dbReference type="IntAct" id="Q95TU8">
    <property type="interactions" value="3"/>
</dbReference>
<dbReference type="STRING" id="7227.FBpp0309017"/>
<dbReference type="GlyCosmos" id="Q95TU8">
    <property type="glycosylation" value="2 sites, No reported glycans"/>
</dbReference>
<dbReference type="GlyGen" id="Q95TU8">
    <property type="glycosylation" value="2 sites"/>
</dbReference>
<dbReference type="PaxDb" id="7227-FBpp0086514"/>
<dbReference type="DNASU" id="36703"/>
<dbReference type="EnsemblMetazoa" id="FBtr0087382">
    <property type="protein sequence ID" value="FBpp0086514"/>
    <property type="gene ID" value="FBgn0034013"/>
</dbReference>
<dbReference type="EnsemblMetazoa" id="FBtr0339998">
    <property type="protein sequence ID" value="FBpp0309017"/>
    <property type="gene ID" value="FBgn0034013"/>
</dbReference>
<dbReference type="GeneID" id="36703"/>
<dbReference type="KEGG" id="dme:Dmel_CG8166"/>
<dbReference type="UCSC" id="CG8166-RA">
    <property type="organism name" value="d. melanogaster"/>
</dbReference>
<dbReference type="AGR" id="FB:FBgn0034013"/>
<dbReference type="CTD" id="36703"/>
<dbReference type="FlyBase" id="FBgn0034013">
    <property type="gene designation" value="unc-5"/>
</dbReference>
<dbReference type="VEuPathDB" id="VectorBase:FBgn0034013"/>
<dbReference type="eggNOG" id="KOG1480">
    <property type="taxonomic scope" value="Eukaryota"/>
</dbReference>
<dbReference type="GeneTree" id="ENSGT00950000182815"/>
<dbReference type="HOGENOM" id="CLU_014383_0_0_1"/>
<dbReference type="InParanoid" id="Q95TU8"/>
<dbReference type="OMA" id="WEAKHQE"/>
<dbReference type="OrthoDB" id="5973910at2759"/>
<dbReference type="PhylomeDB" id="Q95TU8"/>
<dbReference type="Reactome" id="R-DME-373752">
    <property type="pathway name" value="Netrin-1 signaling"/>
</dbReference>
<dbReference type="Reactome" id="R-DME-418886">
    <property type="pathway name" value="Netrin mediated repulsion signals"/>
</dbReference>
<dbReference type="BioGRID-ORCS" id="36703">
    <property type="hits" value="0 hits in 3 CRISPR screens"/>
</dbReference>
<dbReference type="GenomeRNAi" id="36703"/>
<dbReference type="PRO" id="PR:Q95TU8"/>
<dbReference type="Proteomes" id="UP000000803">
    <property type="component" value="Chromosome 2R"/>
</dbReference>
<dbReference type="Bgee" id="FBgn0034013">
    <property type="expression patterns" value="Expressed in wing disc and 68 other cell types or tissues"/>
</dbReference>
<dbReference type="ExpressionAtlas" id="Q95TU8">
    <property type="expression patterns" value="baseline and differential"/>
</dbReference>
<dbReference type="GO" id="GO:0016020">
    <property type="term" value="C:membrane"/>
    <property type="evidence" value="ECO:0007669"/>
    <property type="project" value="UniProtKB-SubCell"/>
</dbReference>
<dbReference type="GO" id="GO:0005043">
    <property type="term" value="F:netrin receptor activity involved in chemorepulsion"/>
    <property type="evidence" value="ECO:0000250"/>
    <property type="project" value="FlyBase"/>
</dbReference>
<dbReference type="GO" id="GO:0007411">
    <property type="term" value="P:axon guidance"/>
    <property type="evidence" value="ECO:0000315"/>
    <property type="project" value="FlyBase"/>
</dbReference>
<dbReference type="GO" id="GO:0008347">
    <property type="term" value="P:glial cell migration"/>
    <property type="evidence" value="ECO:0000315"/>
    <property type="project" value="FlyBase"/>
</dbReference>
<dbReference type="GO" id="GO:0008045">
    <property type="term" value="P:motor neuron axon guidance"/>
    <property type="evidence" value="ECO:0000315"/>
    <property type="project" value="FlyBase"/>
</dbReference>
<dbReference type="GO" id="GO:0030335">
    <property type="term" value="P:positive regulation of cell migration"/>
    <property type="evidence" value="ECO:0000315"/>
    <property type="project" value="FlyBase"/>
</dbReference>
<dbReference type="GO" id="GO:0007432">
    <property type="term" value="P:salivary gland boundary specification"/>
    <property type="evidence" value="ECO:0000315"/>
    <property type="project" value="FlyBase"/>
</dbReference>
<dbReference type="CDD" id="cd08781">
    <property type="entry name" value="Death_UNC5-like"/>
    <property type="match status" value="1"/>
</dbReference>
<dbReference type="FunFam" id="2.20.100.10:FF:000021">
    <property type="entry name" value="semaphorin-5B isoform X1"/>
    <property type="match status" value="1"/>
</dbReference>
<dbReference type="FunFam" id="2.60.40.10:FF:000037">
    <property type="entry name" value="Unc-5 netrin receptor C"/>
    <property type="match status" value="1"/>
</dbReference>
<dbReference type="FunFam" id="2.60.220.30:FF:000015">
    <property type="entry name" value="Unc-5, isoform B"/>
    <property type="match status" value="1"/>
</dbReference>
<dbReference type="Gene3D" id="2.60.220.30">
    <property type="match status" value="1"/>
</dbReference>
<dbReference type="Gene3D" id="1.10.533.10">
    <property type="entry name" value="Death Domain, Fas"/>
    <property type="match status" value="1"/>
</dbReference>
<dbReference type="Gene3D" id="2.60.40.10">
    <property type="entry name" value="Immunoglobulins"/>
    <property type="match status" value="2"/>
</dbReference>
<dbReference type="Gene3D" id="2.20.100.10">
    <property type="entry name" value="Thrombospondin type-1 (TSP1) repeat"/>
    <property type="match status" value="2"/>
</dbReference>
<dbReference type="InterPro" id="IPR011029">
    <property type="entry name" value="DEATH-like_dom_sf"/>
</dbReference>
<dbReference type="InterPro" id="IPR000488">
    <property type="entry name" value="Death_dom"/>
</dbReference>
<dbReference type="InterPro" id="IPR007110">
    <property type="entry name" value="Ig-like_dom"/>
</dbReference>
<dbReference type="InterPro" id="IPR036179">
    <property type="entry name" value="Ig-like_dom_sf"/>
</dbReference>
<dbReference type="InterPro" id="IPR013783">
    <property type="entry name" value="Ig-like_fold"/>
</dbReference>
<dbReference type="InterPro" id="IPR003599">
    <property type="entry name" value="Ig_sub"/>
</dbReference>
<dbReference type="InterPro" id="IPR003598">
    <property type="entry name" value="Ig_sub2"/>
</dbReference>
<dbReference type="InterPro" id="IPR000884">
    <property type="entry name" value="TSP1_rpt"/>
</dbReference>
<dbReference type="InterPro" id="IPR036383">
    <property type="entry name" value="TSP1_rpt_sf"/>
</dbReference>
<dbReference type="InterPro" id="IPR037936">
    <property type="entry name" value="UNC5"/>
</dbReference>
<dbReference type="InterPro" id="IPR033772">
    <property type="entry name" value="UPA"/>
</dbReference>
<dbReference type="InterPro" id="IPR000906">
    <property type="entry name" value="ZU5_dom"/>
</dbReference>
<dbReference type="PANTHER" id="PTHR12582:SF47">
    <property type="entry name" value="NETRIN RECEPTOR UNC-5"/>
    <property type="match status" value="1"/>
</dbReference>
<dbReference type="PANTHER" id="PTHR12582">
    <property type="entry name" value="NETRIN RECEPTOR UNC5"/>
    <property type="match status" value="1"/>
</dbReference>
<dbReference type="Pfam" id="PF00531">
    <property type="entry name" value="Death"/>
    <property type="match status" value="1"/>
</dbReference>
<dbReference type="Pfam" id="PF13927">
    <property type="entry name" value="Ig_3"/>
    <property type="match status" value="1"/>
</dbReference>
<dbReference type="Pfam" id="PF00090">
    <property type="entry name" value="TSP_1"/>
    <property type="match status" value="2"/>
</dbReference>
<dbReference type="Pfam" id="PF17217">
    <property type="entry name" value="UPA"/>
    <property type="match status" value="1"/>
</dbReference>
<dbReference type="Pfam" id="PF00791">
    <property type="entry name" value="ZU5"/>
    <property type="match status" value="1"/>
</dbReference>
<dbReference type="SMART" id="SM00005">
    <property type="entry name" value="DEATH"/>
    <property type="match status" value="1"/>
</dbReference>
<dbReference type="SMART" id="SM00409">
    <property type="entry name" value="IG"/>
    <property type="match status" value="2"/>
</dbReference>
<dbReference type="SMART" id="SM00408">
    <property type="entry name" value="IGc2"/>
    <property type="match status" value="1"/>
</dbReference>
<dbReference type="SMART" id="SM00209">
    <property type="entry name" value="TSP1"/>
    <property type="match status" value="2"/>
</dbReference>
<dbReference type="SMART" id="SM00218">
    <property type="entry name" value="ZU5"/>
    <property type="match status" value="1"/>
</dbReference>
<dbReference type="SUPFAM" id="SSF47986">
    <property type="entry name" value="DEATH domain"/>
    <property type="match status" value="1"/>
</dbReference>
<dbReference type="SUPFAM" id="SSF48726">
    <property type="entry name" value="Immunoglobulin"/>
    <property type="match status" value="1"/>
</dbReference>
<dbReference type="SUPFAM" id="SSF82895">
    <property type="entry name" value="TSP-1 type 1 repeat"/>
    <property type="match status" value="2"/>
</dbReference>
<dbReference type="PROSITE" id="PS50017">
    <property type="entry name" value="DEATH_DOMAIN"/>
    <property type="match status" value="1"/>
</dbReference>
<dbReference type="PROSITE" id="PS50835">
    <property type="entry name" value="IG_LIKE"/>
    <property type="match status" value="1"/>
</dbReference>
<dbReference type="PROSITE" id="PS50092">
    <property type="entry name" value="TSP1"/>
    <property type="match status" value="2"/>
</dbReference>
<dbReference type="PROSITE" id="PS51145">
    <property type="entry name" value="ZU5"/>
    <property type="match status" value="1"/>
</dbReference>
<organism>
    <name type="scientific">Drosophila melanogaster</name>
    <name type="common">Fruit fly</name>
    <dbReference type="NCBI Taxonomy" id="7227"/>
    <lineage>
        <taxon>Eukaryota</taxon>
        <taxon>Metazoa</taxon>
        <taxon>Ecdysozoa</taxon>
        <taxon>Arthropoda</taxon>
        <taxon>Hexapoda</taxon>
        <taxon>Insecta</taxon>
        <taxon>Pterygota</taxon>
        <taxon>Neoptera</taxon>
        <taxon>Endopterygota</taxon>
        <taxon>Diptera</taxon>
        <taxon>Brachycera</taxon>
        <taxon>Muscomorpha</taxon>
        <taxon>Ephydroidea</taxon>
        <taxon>Drosophilidae</taxon>
        <taxon>Drosophila</taxon>
        <taxon>Sophophora</taxon>
    </lineage>
</organism>
<evidence type="ECO:0000250" key="1"/>
<evidence type="ECO:0000255" key="2"/>
<evidence type="ECO:0000255" key="3">
    <source>
        <dbReference type="PROSITE-ProRule" id="PRU00064"/>
    </source>
</evidence>
<evidence type="ECO:0000255" key="4">
    <source>
        <dbReference type="PROSITE-ProRule" id="PRU00210"/>
    </source>
</evidence>
<evidence type="ECO:0000255" key="5">
    <source>
        <dbReference type="PROSITE-ProRule" id="PRU00485"/>
    </source>
</evidence>
<evidence type="ECO:0000256" key="6">
    <source>
        <dbReference type="SAM" id="MobiDB-lite"/>
    </source>
</evidence>
<evidence type="ECO:0000269" key="7">
    <source>
    </source>
</evidence>
<evidence type="ECO:0000269" key="8">
    <source>
    </source>
</evidence>
<evidence type="ECO:0000305" key="9"/>
<feature type="signal peptide" evidence="2">
    <location>
        <begin position="1"/>
        <end position="30"/>
    </location>
</feature>
<feature type="chain" id="PRO_0000036082" description="Netrin receptor unc-5">
    <location>
        <begin position="31"/>
        <end position="1072"/>
    </location>
</feature>
<feature type="topological domain" description="Extracellular" evidence="2">
    <location>
        <begin position="31"/>
        <end position="440"/>
    </location>
</feature>
<feature type="transmembrane region" description="Helical" evidence="2">
    <location>
        <begin position="441"/>
        <end position="461"/>
    </location>
</feature>
<feature type="topological domain" description="Cytoplasmic" evidence="2">
    <location>
        <begin position="462"/>
        <end position="1072"/>
    </location>
</feature>
<feature type="domain" description="Ig-like">
    <location>
        <begin position="128"/>
        <end position="224"/>
    </location>
</feature>
<feature type="domain" description="Ig-like C2-type">
    <location>
        <begin position="232"/>
        <end position="314"/>
    </location>
</feature>
<feature type="domain" description="TSP type-1 1" evidence="4">
    <location>
        <begin position="324"/>
        <end position="379"/>
    </location>
</feature>
<feature type="domain" description="TSP type-1 2" evidence="4">
    <location>
        <begin position="398"/>
        <end position="499"/>
    </location>
</feature>
<feature type="domain" description="ZU5" evidence="5">
    <location>
        <begin position="654"/>
        <end position="802"/>
    </location>
</feature>
<feature type="domain" description="Death" evidence="3">
    <location>
        <begin position="980"/>
        <end position="1067"/>
    </location>
</feature>
<feature type="region of interest" description="Disordered" evidence="6">
    <location>
        <begin position="77"/>
        <end position="100"/>
    </location>
</feature>
<feature type="glycosylation site" description="N-linked (GlcNAc...) asparagine" evidence="2">
    <location>
        <position position="79"/>
    </location>
</feature>
<feature type="glycosylation site" description="N-linked (GlcNAc...) asparagine" evidence="2">
    <location>
        <position position="300"/>
    </location>
</feature>
<feature type="disulfide bond" evidence="1">
    <location>
        <begin position="149"/>
        <end position="207"/>
    </location>
</feature>
<feature type="disulfide bond" evidence="1">
    <location>
        <begin position="253"/>
        <end position="303"/>
    </location>
</feature>
<feature type="disulfide bond" evidence="1">
    <location>
        <begin position="336"/>
        <end position="375"/>
    </location>
</feature>
<feature type="disulfide bond" evidence="1">
    <location>
        <begin position="338"/>
        <end position="378"/>
    </location>
</feature>
<feature type="disulfide bond" evidence="1">
    <location>
        <begin position="352"/>
        <end position="364"/>
    </location>
</feature>
<feature type="sequence conflict" description="In Ref. 1; AAF74193." evidence="9" ref="1">
    <original>P</original>
    <variation>S</variation>
    <location>
        <position position="885"/>
    </location>
</feature>
<keyword id="KW-0217">Developmental protein</keyword>
<keyword id="KW-1015">Disulfide bond</keyword>
<keyword id="KW-0325">Glycoprotein</keyword>
<keyword id="KW-0393">Immunoglobulin domain</keyword>
<keyword id="KW-0472">Membrane</keyword>
<keyword id="KW-0597">Phosphoprotein</keyword>
<keyword id="KW-0675">Receptor</keyword>
<keyword id="KW-1185">Reference proteome</keyword>
<keyword id="KW-0677">Repeat</keyword>
<keyword id="KW-0732">Signal</keyword>
<keyword id="KW-0812">Transmembrane</keyword>
<keyword id="KW-1133">Transmembrane helix</keyword>
<comment type="function">
    <text evidence="7 8">Receptor for netrin required for motor axon guidance. Mediates both short- and long-range axon motor repulsion in the developing nervous system upon ligand binding. Also involved in glial migration. While short-range repulsion requires both fra and unc-5, long-range repulsion only requires unc-5.</text>
</comment>
<comment type="interaction">
    <interactant intactId="EBI-3411972">
        <id>Q95TU8</id>
    </interactant>
    <interactant intactId="EBI-6895883">
        <id>Q0E9F2</id>
        <label>sns</label>
    </interactant>
    <organismsDiffer>false</organismsDiffer>
    <experiments>3</experiments>
</comment>
<comment type="subcellular location">
    <subcellularLocation>
        <location evidence="1">Membrane</location>
        <topology evidence="1">Single-pass type I membrane protein</topology>
    </subcellularLocation>
</comment>
<comment type="tissue specificity">
    <text evidence="7">Prior to gastrulation, it is strongly expressed in the presumptive mesoderm. Mesodermal expression begins to fade during stages 13-14, persisting only in the cells that form the dorsal vessel. Expressed within the CNS from late stage 13, shortly after the first axons have extended. Detected in several dispersed clusters of cells within the CNS, increasing in number as development proceeds. Also expressed in the peripheral and exit glia, which migrate laterally out of the CNS between stages 14 and 17. Strongly expressed in motor axons that exit the CNS ipsilaterally via the segmental nerve root (SN). Not expressed on either commissural or longitudinal axons within the CNS, nor on motor axons that exit via the intersegmental nerve (ISN). In the periphery, it is detected on all branches of the SN. Also expressed at high level in exit and peripheral glia along both the SN and ISN.</text>
</comment>
<comment type="PTM">
    <text evidence="1">Phosphorylated on different cytoplasmic tyrosine residues.</text>
</comment>
<comment type="similarity">
    <text evidence="9">Belongs to the unc-5 family.</text>
</comment>
<reference key="1">
    <citation type="journal article" date="2001" name="Neuron">
        <title>Short- and long-range repulsion by the Drosophila Unc5 netrin receptor.</title>
        <authorList>
            <person name="Keleman K."/>
            <person name="Dickson B.J."/>
        </authorList>
    </citation>
    <scope>NUCLEOTIDE SEQUENCE [MRNA]</scope>
    <scope>FUNCTION</scope>
    <scope>TISSUE SPECIFICITY</scope>
</reference>
<reference key="2">
    <citation type="journal article" date="2000" name="Science">
        <title>The genome sequence of Drosophila melanogaster.</title>
        <authorList>
            <person name="Adams M.D."/>
            <person name="Celniker S.E."/>
            <person name="Holt R.A."/>
            <person name="Evans C.A."/>
            <person name="Gocayne J.D."/>
            <person name="Amanatides P.G."/>
            <person name="Scherer S.E."/>
            <person name="Li P.W."/>
            <person name="Hoskins R.A."/>
            <person name="Galle R.F."/>
            <person name="George R.A."/>
            <person name="Lewis S.E."/>
            <person name="Richards S."/>
            <person name="Ashburner M."/>
            <person name="Henderson S.N."/>
            <person name="Sutton G.G."/>
            <person name="Wortman J.R."/>
            <person name="Yandell M.D."/>
            <person name="Zhang Q."/>
            <person name="Chen L.X."/>
            <person name="Brandon R.C."/>
            <person name="Rogers Y.-H.C."/>
            <person name="Blazej R.G."/>
            <person name="Champe M."/>
            <person name="Pfeiffer B.D."/>
            <person name="Wan K.H."/>
            <person name="Doyle C."/>
            <person name="Baxter E.G."/>
            <person name="Helt G."/>
            <person name="Nelson C.R."/>
            <person name="Miklos G.L.G."/>
            <person name="Abril J.F."/>
            <person name="Agbayani A."/>
            <person name="An H.-J."/>
            <person name="Andrews-Pfannkoch C."/>
            <person name="Baldwin D."/>
            <person name="Ballew R.M."/>
            <person name="Basu A."/>
            <person name="Baxendale J."/>
            <person name="Bayraktaroglu L."/>
            <person name="Beasley E.M."/>
            <person name="Beeson K.Y."/>
            <person name="Benos P.V."/>
            <person name="Berman B.P."/>
            <person name="Bhandari D."/>
            <person name="Bolshakov S."/>
            <person name="Borkova D."/>
            <person name="Botchan M.R."/>
            <person name="Bouck J."/>
            <person name="Brokstein P."/>
            <person name="Brottier P."/>
            <person name="Burtis K.C."/>
            <person name="Busam D.A."/>
            <person name="Butler H."/>
            <person name="Cadieu E."/>
            <person name="Center A."/>
            <person name="Chandra I."/>
            <person name="Cherry J.M."/>
            <person name="Cawley S."/>
            <person name="Dahlke C."/>
            <person name="Davenport L.B."/>
            <person name="Davies P."/>
            <person name="de Pablos B."/>
            <person name="Delcher A."/>
            <person name="Deng Z."/>
            <person name="Mays A.D."/>
            <person name="Dew I."/>
            <person name="Dietz S.M."/>
            <person name="Dodson K."/>
            <person name="Doup L.E."/>
            <person name="Downes M."/>
            <person name="Dugan-Rocha S."/>
            <person name="Dunkov B.C."/>
            <person name="Dunn P."/>
            <person name="Durbin K.J."/>
            <person name="Evangelista C.C."/>
            <person name="Ferraz C."/>
            <person name="Ferriera S."/>
            <person name="Fleischmann W."/>
            <person name="Fosler C."/>
            <person name="Gabrielian A.E."/>
            <person name="Garg N.S."/>
            <person name="Gelbart W.M."/>
            <person name="Glasser K."/>
            <person name="Glodek A."/>
            <person name="Gong F."/>
            <person name="Gorrell J.H."/>
            <person name="Gu Z."/>
            <person name="Guan P."/>
            <person name="Harris M."/>
            <person name="Harris N.L."/>
            <person name="Harvey D.A."/>
            <person name="Heiman T.J."/>
            <person name="Hernandez J.R."/>
            <person name="Houck J."/>
            <person name="Hostin D."/>
            <person name="Houston K.A."/>
            <person name="Howland T.J."/>
            <person name="Wei M.-H."/>
            <person name="Ibegwam C."/>
            <person name="Jalali M."/>
            <person name="Kalush F."/>
            <person name="Karpen G.H."/>
            <person name="Ke Z."/>
            <person name="Kennison J.A."/>
            <person name="Ketchum K.A."/>
            <person name="Kimmel B.E."/>
            <person name="Kodira C.D."/>
            <person name="Kraft C.L."/>
            <person name="Kravitz S."/>
            <person name="Kulp D."/>
            <person name="Lai Z."/>
            <person name="Lasko P."/>
            <person name="Lei Y."/>
            <person name="Levitsky A.A."/>
            <person name="Li J.H."/>
            <person name="Li Z."/>
            <person name="Liang Y."/>
            <person name="Lin X."/>
            <person name="Liu X."/>
            <person name="Mattei B."/>
            <person name="McIntosh T.C."/>
            <person name="McLeod M.P."/>
            <person name="McPherson D."/>
            <person name="Merkulov G."/>
            <person name="Milshina N.V."/>
            <person name="Mobarry C."/>
            <person name="Morris J."/>
            <person name="Moshrefi A."/>
            <person name="Mount S.M."/>
            <person name="Moy M."/>
            <person name="Murphy B."/>
            <person name="Murphy L."/>
            <person name="Muzny D.M."/>
            <person name="Nelson D.L."/>
            <person name="Nelson D.R."/>
            <person name="Nelson K.A."/>
            <person name="Nixon K."/>
            <person name="Nusskern D.R."/>
            <person name="Pacleb J.M."/>
            <person name="Palazzolo M."/>
            <person name="Pittman G.S."/>
            <person name="Pan S."/>
            <person name="Pollard J."/>
            <person name="Puri V."/>
            <person name="Reese M.G."/>
            <person name="Reinert K."/>
            <person name="Remington K."/>
            <person name="Saunders R.D.C."/>
            <person name="Scheeler F."/>
            <person name="Shen H."/>
            <person name="Shue B.C."/>
            <person name="Siden-Kiamos I."/>
            <person name="Simpson M."/>
            <person name="Skupski M.P."/>
            <person name="Smith T.J."/>
            <person name="Spier E."/>
            <person name="Spradling A.C."/>
            <person name="Stapleton M."/>
            <person name="Strong R."/>
            <person name="Sun E."/>
            <person name="Svirskas R."/>
            <person name="Tector C."/>
            <person name="Turner R."/>
            <person name="Venter E."/>
            <person name="Wang A.H."/>
            <person name="Wang X."/>
            <person name="Wang Z.-Y."/>
            <person name="Wassarman D.A."/>
            <person name="Weinstock G.M."/>
            <person name="Weissenbach J."/>
            <person name="Williams S.M."/>
            <person name="Woodage T."/>
            <person name="Worley K.C."/>
            <person name="Wu D."/>
            <person name="Yang S."/>
            <person name="Yao Q.A."/>
            <person name="Ye J."/>
            <person name="Yeh R.-F."/>
            <person name="Zaveri J.S."/>
            <person name="Zhan M."/>
            <person name="Zhang G."/>
            <person name="Zhao Q."/>
            <person name="Zheng L."/>
            <person name="Zheng X.H."/>
            <person name="Zhong F.N."/>
            <person name="Zhong W."/>
            <person name="Zhou X."/>
            <person name="Zhu S.C."/>
            <person name="Zhu X."/>
            <person name="Smith H.O."/>
            <person name="Gibbs R.A."/>
            <person name="Myers E.W."/>
            <person name="Rubin G.M."/>
            <person name="Venter J.C."/>
        </authorList>
    </citation>
    <scope>NUCLEOTIDE SEQUENCE [LARGE SCALE GENOMIC DNA]</scope>
    <source>
        <strain>Berkeley</strain>
    </source>
</reference>
<reference key="3">
    <citation type="journal article" date="2002" name="Genome Biol.">
        <title>Annotation of the Drosophila melanogaster euchromatic genome: a systematic review.</title>
        <authorList>
            <person name="Misra S."/>
            <person name="Crosby M.A."/>
            <person name="Mungall C.J."/>
            <person name="Matthews B.B."/>
            <person name="Campbell K.S."/>
            <person name="Hradecky P."/>
            <person name="Huang Y."/>
            <person name="Kaminker J.S."/>
            <person name="Millburn G.H."/>
            <person name="Prochnik S.E."/>
            <person name="Smith C.D."/>
            <person name="Tupy J.L."/>
            <person name="Whitfield E.J."/>
            <person name="Bayraktaroglu L."/>
            <person name="Berman B.P."/>
            <person name="Bettencourt B.R."/>
            <person name="Celniker S.E."/>
            <person name="de Grey A.D.N.J."/>
            <person name="Drysdale R.A."/>
            <person name="Harris N.L."/>
            <person name="Richter J."/>
            <person name="Russo S."/>
            <person name="Schroeder A.J."/>
            <person name="Shu S.Q."/>
            <person name="Stapleton M."/>
            <person name="Yamada C."/>
            <person name="Ashburner M."/>
            <person name="Gelbart W.M."/>
            <person name="Rubin G.M."/>
            <person name="Lewis S.E."/>
        </authorList>
    </citation>
    <scope>GENOME REANNOTATION</scope>
    <source>
        <strain>Berkeley</strain>
    </source>
</reference>
<reference key="4">
    <citation type="journal article" date="2002" name="Genome Biol.">
        <title>A Drosophila full-length cDNA resource.</title>
        <authorList>
            <person name="Stapleton M."/>
            <person name="Carlson J.W."/>
            <person name="Brokstein P."/>
            <person name="Yu C."/>
            <person name="Champe M."/>
            <person name="George R.A."/>
            <person name="Guarin H."/>
            <person name="Kronmiller B."/>
            <person name="Pacleb J.M."/>
            <person name="Park S."/>
            <person name="Wan K.H."/>
            <person name="Rubin G.M."/>
            <person name="Celniker S.E."/>
        </authorList>
    </citation>
    <scope>NUCLEOTIDE SEQUENCE [LARGE SCALE MRNA]</scope>
    <source>
        <strain>Berkeley</strain>
        <tissue>Embryo</tissue>
    </source>
</reference>
<reference key="5">
    <citation type="journal article" date="2003" name="Neuron">
        <title>Unwrapping glial biology: Gcm target genes regulating glial development, diversification, and function.</title>
        <authorList>
            <person name="Freeman M.R."/>
            <person name="Delrow J."/>
            <person name="Kim J."/>
            <person name="Johnson E."/>
            <person name="Doe C.Q."/>
        </authorList>
    </citation>
    <scope>FUNCTION</scope>
</reference>
<sequence length="1072" mass="116418">MAVINKAGNVIALLLVKLQLILLFTLSVSGELPQLDYGSLSASLEEDAIDPLTAMAPFANSLVTEESAQHKNNAELLGNSSEDENVRPQQGSSSSGLGSSGAAGGSGILLEEFNSGKLSPGEASNTLPIFLIEPESVFVVKNRPAVLKCKASHSLQVIFKCSGSSQPPPSTHETHVDPHTGVNMEEVTATIHRDLVDEFFGDGPFKCECHAWSSRGVVKSQAATVHIAYIRKSFNQSPTSLRLELGSRAELRCEPPGGFPEPKLTWHKNNAVITADSEPGITVSAGTLIFRQVALQHMANYSCSAENIAGRRVSDSAVLIVYVNGGWSTWSPWRECKCAGKPSQGRKRSRTCNNPMPLNGGAQCPGPQIQKSADCAACPEDTQIVSPDGFDISSSKRMARWSAWSDWSICSAECIQVRRRKCLTQGQTQISSEAEEAGDLLLGAPGVGMAALIAAAGVGAVGSPSEATGSSSDIIPGYGKSLCAGKDIQTAECRGEQCQIGKDDFDWTLYLGLAFITAVCFAFGTALICCARRGIRTNPHYNMARSVMDADYMPGVVEKKEMRMHIEASNMGYDYVNPGHRYLPGEHIMGMGIGCGGVTEHHYDVPNLSANYTNPIDHLSVDYLSETGESSTADTSNSTFDMNGKLSILNASKSSTYEMLGSAGGQLRLYGGELLLFVPEHAIGKHVKKHVSLLLLSDECSRVSCATESSILCSSVVHSAPRNYSFVKPVILKIPHCLVAPEQWHVHIYHADSEHDELSVNWRRAVSVGEETINTPMFVQLEATHVFIMTEQLGHFTVVAEPRIQQPSIKMKLLAFSQHTPPSNANCSLRIYVVKDFPNSRDICANVEAKLGGSFLGESQVFAFTLNSRNLNIRVRSADVEAAAPYEHAIPYQHILSNNSILHCEFSLRRQDQNSLCVDFGQGSEDDYYTFNIPAHSMSGSAEELASTTNTTISIDRQGNYVNESCVMDFVQLPHATKRLICGALDPPRADERDWRLLAKKLNTDRYIAYFATKASPTEQILNLWECRANSSPGSSSNSVSHTIMALLLTLKEMGRQDVLDIIVETIGPLWI</sequence>
<protein>
    <recommendedName>
        <fullName>Netrin receptor unc-5</fullName>
    </recommendedName>
    <alternativeName>
        <fullName>Unc5 netrin receptor</fullName>
    </alternativeName>
</protein>
<gene>
    <name type="primary">unc-5</name>
    <name type="ORF">CG8166</name>
</gene>